<reference key="1">
    <citation type="journal article" date="2005" name="Nature">
        <title>The map-based sequence of the rice genome.</title>
        <authorList>
            <consortium name="International rice genome sequencing project (IRGSP)"/>
        </authorList>
    </citation>
    <scope>NUCLEOTIDE SEQUENCE [LARGE SCALE GENOMIC DNA]</scope>
    <source>
        <strain>cv. Nipponbare</strain>
    </source>
</reference>
<reference key="2">
    <citation type="journal article" date="2008" name="Nucleic Acids Res.">
        <title>The rice annotation project database (RAP-DB): 2008 update.</title>
        <authorList>
            <consortium name="The rice annotation project (RAP)"/>
        </authorList>
    </citation>
    <scope>GENOME REANNOTATION</scope>
    <source>
        <strain>cv. Nipponbare</strain>
    </source>
</reference>
<reference key="3">
    <citation type="journal article" date="2013" name="Rice">
        <title>Improvement of the Oryza sativa Nipponbare reference genome using next generation sequence and optical map data.</title>
        <authorList>
            <person name="Kawahara Y."/>
            <person name="de la Bastide M."/>
            <person name="Hamilton J.P."/>
            <person name="Kanamori H."/>
            <person name="McCombie W.R."/>
            <person name="Ouyang S."/>
            <person name="Schwartz D.C."/>
            <person name="Tanaka T."/>
            <person name="Wu J."/>
            <person name="Zhou S."/>
            <person name="Childs K.L."/>
            <person name="Davidson R.M."/>
            <person name="Lin H."/>
            <person name="Quesada-Ocampo L."/>
            <person name="Vaillancourt B."/>
            <person name="Sakai H."/>
            <person name="Lee S.S."/>
            <person name="Kim J."/>
            <person name="Numa H."/>
            <person name="Itoh T."/>
            <person name="Buell C.R."/>
            <person name="Matsumoto T."/>
        </authorList>
    </citation>
    <scope>GENOME REANNOTATION</scope>
    <source>
        <strain>cv. Nipponbare</strain>
    </source>
</reference>
<reference key="4">
    <citation type="journal article" date="2003" name="Science">
        <title>Collection, mapping, and annotation of over 28,000 cDNA clones from japonica rice.</title>
        <authorList>
            <consortium name="The rice full-length cDNA consortium"/>
        </authorList>
    </citation>
    <scope>NUCLEOTIDE SEQUENCE [LARGE SCALE MRNA]</scope>
    <source>
        <strain>cv. Nipponbare</strain>
    </source>
</reference>
<reference key="5">
    <citation type="journal article" date="2013" name="Plant Cell Physiol.">
        <title>A nitrate-inducible GARP family gene encodes an auto-repressible transcriptional repressor in rice.</title>
        <authorList>
            <person name="Sawaki N."/>
            <person name="Tsujimoto R."/>
            <person name="Shigyo M."/>
            <person name="Konishi M."/>
            <person name="Toki S."/>
            <person name="Fujiwara T."/>
            <person name="Yanagisawa S."/>
        </authorList>
    </citation>
    <scope>FUNCTION</scope>
    <scope>SUBCELLULAR LOCATION</scope>
    <scope>INDUCTION BY NITRATE</scope>
</reference>
<comment type="function">
    <text>Transcriptional repressor that may play a role in response to nitrogen. May be involved in a time-dependent signaling for transcriptional regulation of nitrate-responsive genes. Binds specifically to the DNA sequence motif 5'-GAATC-3' or 5'-GAATATTC-3'. Represses the activity of its own promoter trough binding to these motifs.</text>
</comment>
<comment type="subcellular location">
    <subcellularLocation>
        <location evidence="1 3">Nucleus</location>
    </subcellularLocation>
</comment>
<comment type="induction">
    <text evidence="3">Induced by nitrate.</text>
</comment>
<sequence>MEVDHADRDGARRRCREYLLALEEERRKIQVFQRELPLCFDLVTQTIEGMRSQMDAAGSEETVSDQGPPPVLEEFIPLKPSLSLSSSEEESTHADAAKSGKKEEAETSERHSSPPPPPPEAKKVTPDWLQSVQLWSQEEPQQPSSPSPTPTKDLPCKPVALNARKAGGAFQPFEKEKRAELPASSTTAAASSTVVGDSGDKPTDDDTEKHMETDKDNDKDAKDKDKEGQSQPHRKPRRCWAPELHRRFLQALQQLGGSHVATPKQIRELMKVDGLTNDEVKSHLQKYRLHTRRPSSTGQSSAAAGVPAPPAPQFVVVGSIWVPPPEYAAAAAAQQHVQLAAAGNNASGSANPVYAPVAMLPAGLQPHSHRKQHQQQQQGQRHSGSEGRRSGDAGDGSSSSPAVSSSSQTTSA</sequence>
<proteinExistence type="evidence at transcript level"/>
<name>NIGT1_ORYSJ</name>
<feature type="chain" id="PRO_0000439549" description="Transcription factor NIGT1">
    <location>
        <begin position="1"/>
        <end position="412"/>
    </location>
</feature>
<feature type="domain" description="HTH myb-type" evidence="1">
    <location>
        <begin position="232"/>
        <end position="292"/>
    </location>
</feature>
<feature type="DNA-binding region" description="H-T-H motif" evidence="1">
    <location>
        <begin position="263"/>
        <end position="288"/>
    </location>
</feature>
<feature type="region of interest" description="Disordered" evidence="2">
    <location>
        <begin position="54"/>
        <end position="241"/>
    </location>
</feature>
<feature type="region of interest" description="Disordered" evidence="2">
    <location>
        <begin position="286"/>
        <end position="310"/>
    </location>
</feature>
<feature type="region of interest" description="Disordered" evidence="2">
    <location>
        <begin position="358"/>
        <end position="412"/>
    </location>
</feature>
<feature type="compositionally biased region" description="Basic and acidic residues" evidence="2">
    <location>
        <begin position="90"/>
        <end position="112"/>
    </location>
</feature>
<feature type="compositionally biased region" description="Low complexity" evidence="2">
    <location>
        <begin position="183"/>
        <end position="193"/>
    </location>
</feature>
<feature type="compositionally biased region" description="Basic and acidic residues" evidence="2">
    <location>
        <begin position="198"/>
        <end position="228"/>
    </location>
</feature>
<feature type="compositionally biased region" description="Basic and acidic residues" evidence="2">
    <location>
        <begin position="383"/>
        <end position="392"/>
    </location>
</feature>
<feature type="compositionally biased region" description="Low complexity" evidence="2">
    <location>
        <begin position="395"/>
        <end position="412"/>
    </location>
</feature>
<accession>Q6Z869</accession>
<evidence type="ECO:0000255" key="1">
    <source>
        <dbReference type="PROSITE-ProRule" id="PRU00625"/>
    </source>
</evidence>
<evidence type="ECO:0000256" key="2">
    <source>
        <dbReference type="SAM" id="MobiDB-lite"/>
    </source>
</evidence>
<evidence type="ECO:0000269" key="3">
    <source>
    </source>
</evidence>
<evidence type="ECO:0000303" key="4">
    <source>
    </source>
</evidence>
<evidence type="ECO:0000305" key="5"/>
<evidence type="ECO:0000312" key="6">
    <source>
        <dbReference type="EMBL" id="BAD15692.1"/>
    </source>
</evidence>
<evidence type="ECO:0000312" key="7">
    <source>
        <dbReference type="EMBL" id="BAS78407.1"/>
    </source>
</evidence>
<organism>
    <name type="scientific">Oryza sativa subsp. japonica</name>
    <name type="common">Rice</name>
    <dbReference type="NCBI Taxonomy" id="39947"/>
    <lineage>
        <taxon>Eukaryota</taxon>
        <taxon>Viridiplantae</taxon>
        <taxon>Streptophyta</taxon>
        <taxon>Embryophyta</taxon>
        <taxon>Tracheophyta</taxon>
        <taxon>Spermatophyta</taxon>
        <taxon>Magnoliopsida</taxon>
        <taxon>Liliopsida</taxon>
        <taxon>Poales</taxon>
        <taxon>Poaceae</taxon>
        <taxon>BOP clade</taxon>
        <taxon>Oryzoideae</taxon>
        <taxon>Oryzeae</taxon>
        <taxon>Oryzinae</taxon>
        <taxon>Oryza</taxon>
        <taxon>Oryza sativa</taxon>
    </lineage>
</organism>
<gene>
    <name evidence="4" type="primary">NIGT1</name>
    <name evidence="7" type="ordered locus">Os02g0325600</name>
    <name evidence="5" type="ordered locus">LOC_Os02g22020</name>
    <name evidence="6" type="ORF">P0476C12.20</name>
</gene>
<dbReference type="EMBL" id="AP004789">
    <property type="protein sequence ID" value="BAD15692.1"/>
    <property type="molecule type" value="Genomic_DNA"/>
</dbReference>
<dbReference type="EMBL" id="AP008208">
    <property type="protein sequence ID" value="BAF08616.1"/>
    <property type="molecule type" value="Genomic_DNA"/>
</dbReference>
<dbReference type="EMBL" id="AP014958">
    <property type="protein sequence ID" value="BAS78407.1"/>
    <property type="molecule type" value="Genomic_DNA"/>
</dbReference>
<dbReference type="EMBL" id="AK064355">
    <property type="protein sequence ID" value="BAG89081.1"/>
    <property type="molecule type" value="mRNA"/>
</dbReference>
<dbReference type="EMBL" id="AK101809">
    <property type="protein sequence ID" value="BAG95241.1"/>
    <property type="molecule type" value="mRNA"/>
</dbReference>
<dbReference type="RefSeq" id="XP_015623779.1">
    <property type="nucleotide sequence ID" value="XM_015768293.1"/>
</dbReference>
<dbReference type="SMR" id="Q6Z869"/>
<dbReference type="FunCoup" id="Q6Z869">
    <property type="interactions" value="947"/>
</dbReference>
<dbReference type="STRING" id="39947.Q6Z869"/>
<dbReference type="PaxDb" id="39947-Q6Z869"/>
<dbReference type="EnsemblPlants" id="Os02t0325600-01">
    <property type="protein sequence ID" value="Os02t0325600-01"/>
    <property type="gene ID" value="Os02g0325600"/>
</dbReference>
<dbReference type="EnsemblPlants" id="Os02t0325600-02">
    <property type="protein sequence ID" value="Os02t0325600-02"/>
    <property type="gene ID" value="Os02g0325600"/>
</dbReference>
<dbReference type="Gramene" id="Os02t0325600-01">
    <property type="protein sequence ID" value="Os02t0325600-01"/>
    <property type="gene ID" value="Os02g0325600"/>
</dbReference>
<dbReference type="Gramene" id="Os02t0325600-02">
    <property type="protein sequence ID" value="Os02t0325600-02"/>
    <property type="gene ID" value="Os02g0325600"/>
</dbReference>
<dbReference type="KEGG" id="dosa:Os02g0325600"/>
<dbReference type="eggNOG" id="ENOG502QSXV">
    <property type="taxonomic scope" value="Eukaryota"/>
</dbReference>
<dbReference type="HOGENOM" id="CLU_036551_0_0_1"/>
<dbReference type="InParanoid" id="Q6Z869"/>
<dbReference type="OMA" id="WVPPQDY"/>
<dbReference type="OrthoDB" id="1908613at2759"/>
<dbReference type="Proteomes" id="UP000000763">
    <property type="component" value="Chromosome 2"/>
</dbReference>
<dbReference type="Proteomes" id="UP000059680">
    <property type="component" value="Chromosome 2"/>
</dbReference>
<dbReference type="GO" id="GO:0005634">
    <property type="term" value="C:nucleus"/>
    <property type="evidence" value="ECO:0000314"/>
    <property type="project" value="UniProtKB"/>
</dbReference>
<dbReference type="GO" id="GO:0003700">
    <property type="term" value="F:DNA-binding transcription factor activity"/>
    <property type="evidence" value="ECO:0007669"/>
    <property type="project" value="InterPro"/>
</dbReference>
<dbReference type="GO" id="GO:0043565">
    <property type="term" value="F:sequence-specific DNA binding"/>
    <property type="evidence" value="ECO:0000314"/>
    <property type="project" value="UniProtKB"/>
</dbReference>
<dbReference type="GO" id="GO:0045892">
    <property type="term" value="P:negative regulation of DNA-templated transcription"/>
    <property type="evidence" value="ECO:0000314"/>
    <property type="project" value="UniProtKB"/>
</dbReference>
<dbReference type="FunFam" id="1.10.10.60:FF:000002">
    <property type="entry name" value="Myb family transcription factor"/>
    <property type="match status" value="1"/>
</dbReference>
<dbReference type="Gene3D" id="1.10.10.60">
    <property type="entry name" value="Homeodomain-like"/>
    <property type="match status" value="1"/>
</dbReference>
<dbReference type="InterPro" id="IPR009057">
    <property type="entry name" value="Homeodomain-like_sf"/>
</dbReference>
<dbReference type="InterPro" id="IPR044787">
    <property type="entry name" value="HRS1-like"/>
</dbReference>
<dbReference type="InterPro" id="IPR017930">
    <property type="entry name" value="Myb_dom"/>
</dbReference>
<dbReference type="InterPro" id="IPR006447">
    <property type="entry name" value="Myb_dom_plants"/>
</dbReference>
<dbReference type="InterPro" id="IPR001005">
    <property type="entry name" value="SANT/Myb"/>
</dbReference>
<dbReference type="NCBIfam" id="TIGR01557">
    <property type="entry name" value="myb_SHAQKYF"/>
    <property type="match status" value="1"/>
</dbReference>
<dbReference type="PANTHER" id="PTHR31003">
    <property type="entry name" value="MYB FAMILY TRANSCRIPTION FACTOR"/>
    <property type="match status" value="1"/>
</dbReference>
<dbReference type="PANTHER" id="PTHR31003:SF16">
    <property type="entry name" value="TRANSCRIPTION FACTOR HHO2"/>
    <property type="match status" value="1"/>
</dbReference>
<dbReference type="Pfam" id="PF00249">
    <property type="entry name" value="Myb_DNA-binding"/>
    <property type="match status" value="1"/>
</dbReference>
<dbReference type="SUPFAM" id="SSF46689">
    <property type="entry name" value="Homeodomain-like"/>
    <property type="match status" value="1"/>
</dbReference>
<dbReference type="PROSITE" id="PS51294">
    <property type="entry name" value="HTH_MYB"/>
    <property type="match status" value="1"/>
</dbReference>
<keyword id="KW-0238">DNA-binding</keyword>
<keyword id="KW-0539">Nucleus</keyword>
<keyword id="KW-1185">Reference proteome</keyword>
<keyword id="KW-0804">Transcription</keyword>
<keyword id="KW-0805">Transcription regulation</keyword>
<protein>
    <recommendedName>
        <fullName evidence="5">Transcription factor NIGT1</fullName>
    </recommendedName>
    <alternativeName>
        <fullName evidence="5">MYB-domain transcription factor NIGT1</fullName>
    </alternativeName>
    <alternativeName>
        <fullName evidence="4">Protein NITRATE-INDUCIBLE GARP-TYPE TRANSCRIPTIONAL REPRESSOR 1</fullName>
    </alternativeName>
</protein>